<organism>
    <name type="scientific">Methylobacterium radiotolerans (strain ATCC 27329 / DSM 1819 / JCM 2831 / NBRC 15690 / NCIMB 10815 / 0-1)</name>
    <dbReference type="NCBI Taxonomy" id="426355"/>
    <lineage>
        <taxon>Bacteria</taxon>
        <taxon>Pseudomonadati</taxon>
        <taxon>Pseudomonadota</taxon>
        <taxon>Alphaproteobacteria</taxon>
        <taxon>Hyphomicrobiales</taxon>
        <taxon>Methylobacteriaceae</taxon>
        <taxon>Methylobacterium</taxon>
    </lineage>
</organism>
<dbReference type="EMBL" id="CP001001">
    <property type="protein sequence ID" value="ACB22138.1"/>
    <property type="molecule type" value="Genomic_DNA"/>
</dbReference>
<dbReference type="RefSeq" id="WP_012317137.1">
    <property type="nucleotide sequence ID" value="NC_010505.1"/>
</dbReference>
<dbReference type="SMR" id="B1M6A3"/>
<dbReference type="STRING" id="426355.Mrad2831_0111"/>
<dbReference type="GeneID" id="6136411"/>
<dbReference type="KEGG" id="mrd:Mrad2831_0111"/>
<dbReference type="PATRIC" id="fig|426355.14.peg.136"/>
<dbReference type="eggNOG" id="COG0632">
    <property type="taxonomic scope" value="Bacteria"/>
</dbReference>
<dbReference type="HOGENOM" id="CLU_087936_3_0_5"/>
<dbReference type="OrthoDB" id="5293449at2"/>
<dbReference type="Proteomes" id="UP000006589">
    <property type="component" value="Chromosome"/>
</dbReference>
<dbReference type="GO" id="GO:0005737">
    <property type="term" value="C:cytoplasm"/>
    <property type="evidence" value="ECO:0007669"/>
    <property type="project" value="UniProtKB-SubCell"/>
</dbReference>
<dbReference type="GO" id="GO:0009379">
    <property type="term" value="C:Holliday junction helicase complex"/>
    <property type="evidence" value="ECO:0007669"/>
    <property type="project" value="InterPro"/>
</dbReference>
<dbReference type="GO" id="GO:0048476">
    <property type="term" value="C:Holliday junction resolvase complex"/>
    <property type="evidence" value="ECO:0007669"/>
    <property type="project" value="UniProtKB-UniRule"/>
</dbReference>
<dbReference type="GO" id="GO:0005524">
    <property type="term" value="F:ATP binding"/>
    <property type="evidence" value="ECO:0007669"/>
    <property type="project" value="InterPro"/>
</dbReference>
<dbReference type="GO" id="GO:0000400">
    <property type="term" value="F:four-way junction DNA binding"/>
    <property type="evidence" value="ECO:0007669"/>
    <property type="project" value="UniProtKB-UniRule"/>
</dbReference>
<dbReference type="GO" id="GO:0009378">
    <property type="term" value="F:four-way junction helicase activity"/>
    <property type="evidence" value="ECO:0007669"/>
    <property type="project" value="InterPro"/>
</dbReference>
<dbReference type="GO" id="GO:0006310">
    <property type="term" value="P:DNA recombination"/>
    <property type="evidence" value="ECO:0007669"/>
    <property type="project" value="UniProtKB-UniRule"/>
</dbReference>
<dbReference type="GO" id="GO:0006281">
    <property type="term" value="P:DNA repair"/>
    <property type="evidence" value="ECO:0007669"/>
    <property type="project" value="UniProtKB-UniRule"/>
</dbReference>
<dbReference type="Gene3D" id="1.10.150.20">
    <property type="entry name" value="5' to 3' exonuclease, C-terminal subdomain"/>
    <property type="match status" value="1"/>
</dbReference>
<dbReference type="Gene3D" id="1.10.8.10">
    <property type="entry name" value="DNA helicase RuvA subunit, C-terminal domain"/>
    <property type="match status" value="1"/>
</dbReference>
<dbReference type="Gene3D" id="2.40.50.140">
    <property type="entry name" value="Nucleic acid-binding proteins"/>
    <property type="match status" value="1"/>
</dbReference>
<dbReference type="HAMAP" id="MF_00031">
    <property type="entry name" value="DNA_HJ_migration_RuvA"/>
    <property type="match status" value="1"/>
</dbReference>
<dbReference type="InterPro" id="IPR013849">
    <property type="entry name" value="DNA_helicase_Holl-junc_RuvA_I"/>
</dbReference>
<dbReference type="InterPro" id="IPR012340">
    <property type="entry name" value="NA-bd_OB-fold"/>
</dbReference>
<dbReference type="InterPro" id="IPR000085">
    <property type="entry name" value="RuvA"/>
</dbReference>
<dbReference type="InterPro" id="IPR010994">
    <property type="entry name" value="RuvA_2-like"/>
</dbReference>
<dbReference type="InterPro" id="IPR011114">
    <property type="entry name" value="RuvA_C"/>
</dbReference>
<dbReference type="InterPro" id="IPR036267">
    <property type="entry name" value="RuvA_C_sf"/>
</dbReference>
<dbReference type="NCBIfam" id="TIGR00084">
    <property type="entry name" value="ruvA"/>
    <property type="match status" value="1"/>
</dbReference>
<dbReference type="Pfam" id="PF14520">
    <property type="entry name" value="HHH_5"/>
    <property type="match status" value="1"/>
</dbReference>
<dbReference type="Pfam" id="PF07499">
    <property type="entry name" value="RuvA_C"/>
    <property type="match status" value="1"/>
</dbReference>
<dbReference type="Pfam" id="PF01330">
    <property type="entry name" value="RuvA_N"/>
    <property type="match status" value="1"/>
</dbReference>
<dbReference type="SUPFAM" id="SSF46929">
    <property type="entry name" value="DNA helicase RuvA subunit, C-terminal domain"/>
    <property type="match status" value="1"/>
</dbReference>
<dbReference type="SUPFAM" id="SSF50249">
    <property type="entry name" value="Nucleic acid-binding proteins"/>
    <property type="match status" value="1"/>
</dbReference>
<dbReference type="SUPFAM" id="SSF47781">
    <property type="entry name" value="RuvA domain 2-like"/>
    <property type="match status" value="1"/>
</dbReference>
<reference key="1">
    <citation type="submission" date="2008-03" db="EMBL/GenBank/DDBJ databases">
        <title>Complete sequence of chromosome of Methylobacterium radiotolerans JCM 2831.</title>
        <authorList>
            <consortium name="US DOE Joint Genome Institute"/>
            <person name="Copeland A."/>
            <person name="Lucas S."/>
            <person name="Lapidus A."/>
            <person name="Glavina del Rio T."/>
            <person name="Dalin E."/>
            <person name="Tice H."/>
            <person name="Bruce D."/>
            <person name="Goodwin L."/>
            <person name="Pitluck S."/>
            <person name="Kiss H."/>
            <person name="Brettin T."/>
            <person name="Detter J.C."/>
            <person name="Han C."/>
            <person name="Kuske C.R."/>
            <person name="Schmutz J."/>
            <person name="Larimer F."/>
            <person name="Land M."/>
            <person name="Hauser L."/>
            <person name="Kyrpides N."/>
            <person name="Mikhailova N."/>
            <person name="Marx C.J."/>
            <person name="Richardson P."/>
        </authorList>
    </citation>
    <scope>NUCLEOTIDE SEQUENCE [LARGE SCALE GENOMIC DNA]</scope>
    <source>
        <strain>ATCC 27329 / DSM 1819 / JCM 2831 / NBRC 15690 / NCIMB 10815 / 0-1</strain>
    </source>
</reference>
<gene>
    <name evidence="1" type="primary">ruvA</name>
    <name type="ordered locus">Mrad2831_0111</name>
</gene>
<keyword id="KW-0963">Cytoplasm</keyword>
<keyword id="KW-0227">DNA damage</keyword>
<keyword id="KW-0233">DNA recombination</keyword>
<keyword id="KW-0234">DNA repair</keyword>
<keyword id="KW-0238">DNA-binding</keyword>
<name>RUVA_METRJ</name>
<protein>
    <recommendedName>
        <fullName evidence="1">Holliday junction branch migration complex subunit RuvA</fullName>
    </recommendedName>
</protein>
<sequence>MIGKLKGVVDSFGEDFVILDVSGVGYIVHCSARTLQRMPKVGEPAELSIETHVREDMIRLYGFRSDAEREWFRLLQTVQGVGARVALGVLSVLEPEALASAIATGDKGSISRAPGVGPRLAARLAAELKDKAPAFAPVDPALVALAGAVEEGAAPQPVADAVSALVNLGYPQVQAAAAIAAALKGAGEGAEAKVLIRLGLRELAR</sequence>
<evidence type="ECO:0000255" key="1">
    <source>
        <dbReference type="HAMAP-Rule" id="MF_00031"/>
    </source>
</evidence>
<feature type="chain" id="PRO_1000090338" description="Holliday junction branch migration complex subunit RuvA">
    <location>
        <begin position="1"/>
        <end position="205"/>
    </location>
</feature>
<feature type="region of interest" description="Domain I" evidence="1">
    <location>
        <begin position="1"/>
        <end position="64"/>
    </location>
</feature>
<feature type="region of interest" description="Domain II" evidence="1">
    <location>
        <begin position="65"/>
        <end position="143"/>
    </location>
</feature>
<feature type="region of interest" description="Flexible linker" evidence="1">
    <location>
        <begin position="144"/>
        <end position="152"/>
    </location>
</feature>
<feature type="region of interest" description="Domain III" evidence="1">
    <location>
        <begin position="153"/>
        <end position="205"/>
    </location>
</feature>
<proteinExistence type="inferred from homology"/>
<comment type="function">
    <text evidence="1">The RuvA-RuvB-RuvC complex processes Holliday junction (HJ) DNA during genetic recombination and DNA repair, while the RuvA-RuvB complex plays an important role in the rescue of blocked DNA replication forks via replication fork reversal (RFR). RuvA specifically binds to HJ cruciform DNA, conferring on it an open structure. The RuvB hexamer acts as an ATP-dependent pump, pulling dsDNA into and through the RuvAB complex. HJ branch migration allows RuvC to scan DNA until it finds its consensus sequence, where it cleaves and resolves the cruciform DNA.</text>
</comment>
<comment type="subunit">
    <text evidence="1">Homotetramer. Forms an RuvA(8)-RuvB(12)-Holliday junction (HJ) complex. HJ DNA is sandwiched between 2 RuvA tetramers; dsDNA enters through RuvA and exits via RuvB. An RuvB hexamer assembles on each DNA strand where it exits the tetramer. Each RuvB hexamer is contacted by two RuvA subunits (via domain III) on 2 adjacent RuvB subunits; this complex drives branch migration. In the full resolvosome a probable DNA-RuvA(4)-RuvB(12)-RuvC(2) complex forms which resolves the HJ.</text>
</comment>
<comment type="subcellular location">
    <subcellularLocation>
        <location evidence="1">Cytoplasm</location>
    </subcellularLocation>
</comment>
<comment type="domain">
    <text evidence="1">Has three domains with a flexible linker between the domains II and III and assumes an 'L' shape. Domain III is highly mobile and contacts RuvB.</text>
</comment>
<comment type="similarity">
    <text evidence="1">Belongs to the RuvA family.</text>
</comment>
<accession>B1M6A3</accession>